<name>MSL7_MYCMM</name>
<accession>B2HIL7</accession>
<comment type="function">
    <text evidence="7">Catalyzes the elongation by iterative transfer of p-hydroxybenzoyl group from FadD22 (pHBA-S-FAdD22) to form p-hydroxyphenylalkanoate (pHPA) intermediates during phenolphthiocerol (PPOL) biosynthesis. PPOL is an important intermediate in the biosynthesis of phenolic glycolipid (mycosid B).</text>
</comment>
<comment type="catalytic activity">
    <reaction evidence="5">
        <text>a fatty acyl-[ACP] + malonyl-[ACP] + H(+) = a 3-oxoacyl-[ACP] + holo-[ACP] + CO2</text>
        <dbReference type="Rhea" id="RHEA:22836"/>
        <dbReference type="Rhea" id="RHEA-COMP:9623"/>
        <dbReference type="Rhea" id="RHEA-COMP:9685"/>
        <dbReference type="Rhea" id="RHEA-COMP:9916"/>
        <dbReference type="Rhea" id="RHEA-COMP:14125"/>
        <dbReference type="ChEBI" id="CHEBI:15378"/>
        <dbReference type="ChEBI" id="CHEBI:16526"/>
        <dbReference type="ChEBI" id="CHEBI:64479"/>
        <dbReference type="ChEBI" id="CHEBI:78449"/>
        <dbReference type="ChEBI" id="CHEBI:78776"/>
        <dbReference type="ChEBI" id="CHEBI:138651"/>
        <dbReference type="EC" id="2.3.1.41"/>
    </reaction>
</comment>
<comment type="cofactor">
    <cofactor evidence="1">
        <name>pantetheine 4'-phosphate</name>
        <dbReference type="ChEBI" id="CHEBI:47942"/>
    </cofactor>
    <text evidence="1">Binds 1 phosphopantetheine covalently.</text>
</comment>
<comment type="pathway">
    <text>Lipid metabolism; fatty acid biosynthesis.</text>
</comment>
<comment type="similarity">
    <text evidence="8">Belongs to the thiolase-like superfamily. Beta-ketoacyl-ACP synthases family.</text>
</comment>
<proteinExistence type="evidence at protein level"/>
<reference key="1">
    <citation type="journal article" date="2008" name="Genome Res.">
        <title>Insights from the complete genome sequence of Mycobacterium marinum on the evolution of Mycobacterium tuberculosis.</title>
        <authorList>
            <person name="Stinear T.P."/>
            <person name="Seemann T."/>
            <person name="Harrison P.F."/>
            <person name="Jenkin G.A."/>
            <person name="Davies J.K."/>
            <person name="Johnson P.D."/>
            <person name="Abdellah Z."/>
            <person name="Arrowsmith C."/>
            <person name="Chillingworth T."/>
            <person name="Churcher C."/>
            <person name="Clarke K."/>
            <person name="Cronin A."/>
            <person name="Davis P."/>
            <person name="Goodhead I."/>
            <person name="Holroyd N."/>
            <person name="Jagels K."/>
            <person name="Lord A."/>
            <person name="Moule S."/>
            <person name="Mungall K."/>
            <person name="Norbertczak H."/>
            <person name="Quail M.A."/>
            <person name="Rabbinowitsch E."/>
            <person name="Walker D."/>
            <person name="White B."/>
            <person name="Whitehead S."/>
            <person name="Small P.L."/>
            <person name="Brosch R."/>
            <person name="Ramakrishnan L."/>
            <person name="Fischbach M.A."/>
            <person name="Parkhill J."/>
            <person name="Cole S.T."/>
        </authorList>
    </citation>
    <scope>NUCLEOTIDE SEQUENCE [LARGE SCALE GENOMIC DNA]</scope>
    <source>
        <strain>ATCC BAA-535 / M</strain>
    </source>
</reference>
<reference key="2">
    <citation type="journal article" date="2009" name="J. Am. Chem. Soc.">
        <title>Cooperation between a coenzyme A-independent stand-alone initiation module and an iterative type I polyketide synthase during synthesis of mycobacterial phenolic glycolipids.</title>
        <authorList>
            <person name="He W."/>
            <person name="Soll C.E."/>
            <person name="Chavadi S.S."/>
            <person name="Zhang G."/>
            <person name="Warren J.D."/>
            <person name="Quadri L.E."/>
        </authorList>
    </citation>
    <scope>FUNCTION AS A POLYKETIDE SYNTHASE</scope>
    <scope>MUTAGENESIS OF CYS-211 AND SER-2039</scope>
    <source>
        <strain>ATCC BAA-535 / M</strain>
    </source>
</reference>
<dbReference type="EC" id="2.3.1.41"/>
<dbReference type="EMBL" id="CP000854">
    <property type="protein sequence ID" value="ACC40211.1"/>
    <property type="molecule type" value="Genomic_DNA"/>
</dbReference>
<dbReference type="RefSeq" id="WP_012393570.1">
    <property type="nucleotide sequence ID" value="NC_010612.1"/>
</dbReference>
<dbReference type="SMR" id="B2HIL7"/>
<dbReference type="STRING" id="216594.MMAR_1762"/>
<dbReference type="KEGG" id="mmi:MMAR_1762"/>
<dbReference type="eggNOG" id="COG0604">
    <property type="taxonomic scope" value="Bacteria"/>
</dbReference>
<dbReference type="eggNOG" id="COG3321">
    <property type="taxonomic scope" value="Bacteria"/>
</dbReference>
<dbReference type="HOGENOM" id="CLU_000022_35_5_11"/>
<dbReference type="OrthoDB" id="4516163at2"/>
<dbReference type="UniPathway" id="UPA00094"/>
<dbReference type="Proteomes" id="UP000001190">
    <property type="component" value="Chromosome"/>
</dbReference>
<dbReference type="GO" id="GO:0034081">
    <property type="term" value="C:polyketide synthase complex"/>
    <property type="evidence" value="ECO:0000314"/>
    <property type="project" value="UniProtKB"/>
</dbReference>
<dbReference type="GO" id="GO:0004315">
    <property type="term" value="F:3-oxoacyl-[acyl-carrier-protein] synthase activity"/>
    <property type="evidence" value="ECO:0007669"/>
    <property type="project" value="UniProtKB-EC"/>
</dbReference>
<dbReference type="GO" id="GO:0004312">
    <property type="term" value="F:fatty acid synthase activity"/>
    <property type="evidence" value="ECO:0007669"/>
    <property type="project" value="TreeGrafter"/>
</dbReference>
<dbReference type="GO" id="GO:0016491">
    <property type="term" value="F:oxidoreductase activity"/>
    <property type="evidence" value="ECO:0007669"/>
    <property type="project" value="InterPro"/>
</dbReference>
<dbReference type="GO" id="GO:0031177">
    <property type="term" value="F:phosphopantetheine binding"/>
    <property type="evidence" value="ECO:0007669"/>
    <property type="project" value="InterPro"/>
</dbReference>
<dbReference type="GO" id="GO:0071766">
    <property type="term" value="P:Actinobacterium-type cell wall biogenesis"/>
    <property type="evidence" value="ECO:0000314"/>
    <property type="project" value="UniProtKB"/>
</dbReference>
<dbReference type="GO" id="GO:0006633">
    <property type="term" value="P:fatty acid biosynthetic process"/>
    <property type="evidence" value="ECO:0007669"/>
    <property type="project" value="UniProtKB-UniPathway"/>
</dbReference>
<dbReference type="GO" id="GO:0008610">
    <property type="term" value="P:lipid biosynthetic process"/>
    <property type="evidence" value="ECO:0000314"/>
    <property type="project" value="UniProtKB"/>
</dbReference>
<dbReference type="CDD" id="cd05195">
    <property type="entry name" value="enoyl_red"/>
    <property type="match status" value="1"/>
</dbReference>
<dbReference type="CDD" id="cd08956">
    <property type="entry name" value="KR_3_FAS_SDR_x"/>
    <property type="match status" value="1"/>
</dbReference>
<dbReference type="CDD" id="cd00833">
    <property type="entry name" value="PKS"/>
    <property type="match status" value="1"/>
</dbReference>
<dbReference type="FunFam" id="3.40.50.720:FF:000209">
    <property type="entry name" value="Polyketide synthase Pks12"/>
    <property type="match status" value="1"/>
</dbReference>
<dbReference type="FunFam" id="3.40.47.10:FF:000019">
    <property type="entry name" value="Polyketide synthase type I"/>
    <property type="match status" value="1"/>
</dbReference>
<dbReference type="FunFam" id="3.40.366.10:FF:000002">
    <property type="entry name" value="Probable polyketide synthase 2"/>
    <property type="match status" value="1"/>
</dbReference>
<dbReference type="FunFam" id="3.10.129.110:FF:000003">
    <property type="entry name" value="Probable polyketide synthase pks1"/>
    <property type="match status" value="1"/>
</dbReference>
<dbReference type="FunFam" id="3.90.180.10:FF:000032">
    <property type="entry name" value="Probable polyketide synthase pks1"/>
    <property type="match status" value="1"/>
</dbReference>
<dbReference type="FunFam" id="1.10.1200.10:FF:000007">
    <property type="entry name" value="Probable polyketide synthase pks17"/>
    <property type="match status" value="1"/>
</dbReference>
<dbReference type="FunFam" id="3.40.50.720:FF:000381">
    <property type="entry name" value="Probable polyketide synthase pks17"/>
    <property type="match status" value="1"/>
</dbReference>
<dbReference type="Gene3D" id="3.30.70.3290">
    <property type="match status" value="1"/>
</dbReference>
<dbReference type="Gene3D" id="3.40.47.10">
    <property type="match status" value="1"/>
</dbReference>
<dbReference type="Gene3D" id="6.10.40.10">
    <property type="match status" value="1"/>
</dbReference>
<dbReference type="Gene3D" id="1.10.1200.10">
    <property type="entry name" value="ACP-like"/>
    <property type="match status" value="1"/>
</dbReference>
<dbReference type="Gene3D" id="3.40.366.10">
    <property type="entry name" value="Malonyl-Coenzyme A Acyl Carrier Protein, domain 2"/>
    <property type="match status" value="1"/>
</dbReference>
<dbReference type="Gene3D" id="3.90.180.10">
    <property type="entry name" value="Medium-chain alcohol dehydrogenases, catalytic domain"/>
    <property type="match status" value="1"/>
</dbReference>
<dbReference type="Gene3D" id="3.40.50.720">
    <property type="entry name" value="NAD(P)-binding Rossmann-like Domain"/>
    <property type="match status" value="3"/>
</dbReference>
<dbReference type="Gene3D" id="3.10.129.110">
    <property type="entry name" value="Polyketide synthase dehydratase"/>
    <property type="match status" value="1"/>
</dbReference>
<dbReference type="InterPro" id="IPR001227">
    <property type="entry name" value="Ac_transferase_dom_sf"/>
</dbReference>
<dbReference type="InterPro" id="IPR036736">
    <property type="entry name" value="ACP-like_sf"/>
</dbReference>
<dbReference type="InterPro" id="IPR014043">
    <property type="entry name" value="Acyl_transferase_dom"/>
</dbReference>
<dbReference type="InterPro" id="IPR016035">
    <property type="entry name" value="Acyl_Trfase/lysoPLipase"/>
</dbReference>
<dbReference type="InterPro" id="IPR013154">
    <property type="entry name" value="ADH-like_N"/>
</dbReference>
<dbReference type="InterPro" id="IPR011032">
    <property type="entry name" value="GroES-like_sf"/>
</dbReference>
<dbReference type="InterPro" id="IPR018201">
    <property type="entry name" value="Ketoacyl_synth_AS"/>
</dbReference>
<dbReference type="InterPro" id="IPR014031">
    <property type="entry name" value="Ketoacyl_synth_C"/>
</dbReference>
<dbReference type="InterPro" id="IPR014030">
    <property type="entry name" value="Ketoacyl_synth_N"/>
</dbReference>
<dbReference type="InterPro" id="IPR016036">
    <property type="entry name" value="Malonyl_transacylase_ACP-bd"/>
</dbReference>
<dbReference type="InterPro" id="IPR036291">
    <property type="entry name" value="NAD(P)-bd_dom_sf"/>
</dbReference>
<dbReference type="InterPro" id="IPR032821">
    <property type="entry name" value="PKS_assoc"/>
</dbReference>
<dbReference type="InterPro" id="IPR020841">
    <property type="entry name" value="PKS_Beta-ketoAc_synthase_dom"/>
</dbReference>
<dbReference type="InterPro" id="IPR042104">
    <property type="entry name" value="PKS_dehydratase_sf"/>
</dbReference>
<dbReference type="InterPro" id="IPR020807">
    <property type="entry name" value="PKS_DH"/>
</dbReference>
<dbReference type="InterPro" id="IPR049551">
    <property type="entry name" value="PKS_DH_C"/>
</dbReference>
<dbReference type="InterPro" id="IPR049552">
    <property type="entry name" value="PKS_DH_N"/>
</dbReference>
<dbReference type="InterPro" id="IPR020843">
    <property type="entry name" value="PKS_ER"/>
</dbReference>
<dbReference type="InterPro" id="IPR013968">
    <property type="entry name" value="PKS_KR"/>
</dbReference>
<dbReference type="InterPro" id="IPR049900">
    <property type="entry name" value="PKS_mFAS_DH"/>
</dbReference>
<dbReference type="InterPro" id="IPR050091">
    <property type="entry name" value="PKS_NRPS_Biosynth_Enz"/>
</dbReference>
<dbReference type="InterPro" id="IPR020806">
    <property type="entry name" value="PKS_PP-bd"/>
</dbReference>
<dbReference type="InterPro" id="IPR036299">
    <property type="entry name" value="Polyketide_synth_docking_sf"/>
</dbReference>
<dbReference type="InterPro" id="IPR009081">
    <property type="entry name" value="PP-bd_ACP"/>
</dbReference>
<dbReference type="InterPro" id="IPR006162">
    <property type="entry name" value="Ppantetheine_attach_site"/>
</dbReference>
<dbReference type="InterPro" id="IPR055123">
    <property type="entry name" value="SpnB-like_Rossmann"/>
</dbReference>
<dbReference type="InterPro" id="IPR016039">
    <property type="entry name" value="Thiolase-like"/>
</dbReference>
<dbReference type="PANTHER" id="PTHR43775">
    <property type="entry name" value="FATTY ACID SYNTHASE"/>
    <property type="match status" value="1"/>
</dbReference>
<dbReference type="PANTHER" id="PTHR43775:SF51">
    <property type="entry name" value="INACTIVE PHENOLPHTHIOCEROL SYNTHESIS POLYKETIDE SYNTHASE TYPE I PKS1-RELATED"/>
    <property type="match status" value="1"/>
</dbReference>
<dbReference type="Pfam" id="PF00698">
    <property type="entry name" value="Acyl_transf_1"/>
    <property type="match status" value="1"/>
</dbReference>
<dbReference type="Pfam" id="PF08240">
    <property type="entry name" value="ADH_N"/>
    <property type="match status" value="1"/>
</dbReference>
<dbReference type="Pfam" id="PF13602">
    <property type="entry name" value="ADH_zinc_N_2"/>
    <property type="match status" value="1"/>
</dbReference>
<dbReference type="Pfam" id="PF16197">
    <property type="entry name" value="KAsynt_C_assoc"/>
    <property type="match status" value="1"/>
</dbReference>
<dbReference type="Pfam" id="PF00109">
    <property type="entry name" value="ketoacyl-synt"/>
    <property type="match status" value="1"/>
</dbReference>
<dbReference type="Pfam" id="PF02801">
    <property type="entry name" value="Ketoacyl-synt_C"/>
    <property type="match status" value="1"/>
</dbReference>
<dbReference type="Pfam" id="PF08659">
    <property type="entry name" value="KR"/>
    <property type="match status" value="1"/>
</dbReference>
<dbReference type="Pfam" id="PF21089">
    <property type="entry name" value="PKS_DH_N"/>
    <property type="match status" value="1"/>
</dbReference>
<dbReference type="Pfam" id="PF00550">
    <property type="entry name" value="PP-binding"/>
    <property type="match status" value="1"/>
</dbReference>
<dbReference type="Pfam" id="PF14765">
    <property type="entry name" value="PS-DH"/>
    <property type="match status" value="1"/>
</dbReference>
<dbReference type="Pfam" id="PF22953">
    <property type="entry name" value="SpnB_Rossmann"/>
    <property type="match status" value="1"/>
</dbReference>
<dbReference type="SMART" id="SM00827">
    <property type="entry name" value="PKS_AT"/>
    <property type="match status" value="1"/>
</dbReference>
<dbReference type="SMART" id="SM00826">
    <property type="entry name" value="PKS_DH"/>
    <property type="match status" value="1"/>
</dbReference>
<dbReference type="SMART" id="SM00829">
    <property type="entry name" value="PKS_ER"/>
    <property type="match status" value="1"/>
</dbReference>
<dbReference type="SMART" id="SM00822">
    <property type="entry name" value="PKS_KR"/>
    <property type="match status" value="1"/>
</dbReference>
<dbReference type="SMART" id="SM00825">
    <property type="entry name" value="PKS_KS"/>
    <property type="match status" value="1"/>
</dbReference>
<dbReference type="SMART" id="SM00823">
    <property type="entry name" value="PKS_PP"/>
    <property type="match status" value="1"/>
</dbReference>
<dbReference type="SMART" id="SM01294">
    <property type="entry name" value="PKS_PP_betabranch"/>
    <property type="match status" value="1"/>
</dbReference>
<dbReference type="SUPFAM" id="SSF47336">
    <property type="entry name" value="ACP-like"/>
    <property type="match status" value="1"/>
</dbReference>
<dbReference type="SUPFAM" id="SSF101173">
    <property type="entry name" value="Docking domain B of the erythromycin polyketide synthase (DEBS)"/>
    <property type="match status" value="1"/>
</dbReference>
<dbReference type="SUPFAM" id="SSF52151">
    <property type="entry name" value="FabD/lysophospholipase-like"/>
    <property type="match status" value="1"/>
</dbReference>
<dbReference type="SUPFAM" id="SSF50129">
    <property type="entry name" value="GroES-like"/>
    <property type="match status" value="1"/>
</dbReference>
<dbReference type="SUPFAM" id="SSF51735">
    <property type="entry name" value="NAD(P)-binding Rossmann-fold domains"/>
    <property type="match status" value="3"/>
</dbReference>
<dbReference type="SUPFAM" id="SSF55048">
    <property type="entry name" value="Probable ACP-binding domain of malonyl-CoA ACP transacylase"/>
    <property type="match status" value="1"/>
</dbReference>
<dbReference type="SUPFAM" id="SSF53901">
    <property type="entry name" value="Thiolase-like"/>
    <property type="match status" value="1"/>
</dbReference>
<dbReference type="PROSITE" id="PS50075">
    <property type="entry name" value="CARRIER"/>
    <property type="match status" value="1"/>
</dbReference>
<dbReference type="PROSITE" id="PS00606">
    <property type="entry name" value="KS3_1"/>
    <property type="match status" value="1"/>
</dbReference>
<dbReference type="PROSITE" id="PS52004">
    <property type="entry name" value="KS3_2"/>
    <property type="match status" value="1"/>
</dbReference>
<dbReference type="PROSITE" id="PS00012">
    <property type="entry name" value="PHOSPHOPANTETHEINE"/>
    <property type="match status" value="1"/>
</dbReference>
<dbReference type="PROSITE" id="PS52019">
    <property type="entry name" value="PKS_MFAS_DH"/>
    <property type="match status" value="1"/>
</dbReference>
<sequence>MTTSGESADQQNDKLFRYLKKVAVELDEARARLREYEQRATEPVAVVGIGCRFPGGADGPEGLWDLVSQGRDAVTEFPNDRGWDTEGLFDPDPDAEGKTYTRWGAFVENATNFDAGFFGIPPSEVLAMDPQQRLMLEVSWEALEHAGIDPMSLRGSSTGVFTGIFAPSYGGKDVGALQGYGLTGSPVSVASGRVAYVLGLEGPALSVDTACSSSLVAIHWAMASLRSGECDMALAGGVTVMGLPSIFVGFSRQRGLAADGRCKAFAAAADGTGWGEGAGVLVLERLSDAQRNGHNVLAVVRGSAINQDGASNGLTAPNGLAQQRVIQAALANCGLTSADVDVVEAHGTATTLGDPIEAEALLATYGQGRPTDQPLWVGSIKSNMGHTQAAAGVAGVIKMVQAMRHGLMPASLHVDEPSKRVDWESGAVSVLAEARDWPDAGRPRRAGVSSFGISGTNAHVILEEAPAPEAVPDSESNKGEPSLPVVPWVISARSAEALTAQAGRLLAHVQADPQSNPVDIGFSLAGRSAFEHRAVVVGADRQQLLTGLATLADGAPGAGVVTGQAGSVGKTAVVFPGQGSQRIGMARELHDQLPVFAEAFDAVADELDRHLRIPLREVMWGSDAALLDSTEFAQPALFAVEVALFAALQRWGLQPDFVMGHSVGELSAAYVAGVLTLADAAMLVVARGRLMQALPAGGAMVAVAAAEDEVLPSLTDGVGIAAINAPKSVVISGAEAAVTAISDQFAQQGRRVHRLAVSHAFHSPLMEPMLEEFARIAAQVEAREPQIALVSNVTGELASADGGFGSAQYWVEHVRRAVRFADSARQLHTLGVTHFVEVGPGSGLTGSIEQSLAPAEAVVVSMLGKDRPEVASVLTAFGQLFSTGMSVDWPAVFAGSGATRVDLPTYAFQRRRFWEVPGADGPADATGLGLGGAEHALLGAVVERPDSGGVVLTGRLALADQPWLADHVIGGVVLFPGAGFVELAIRAGDEVGCAVVEELVLAAPLVLHPGMGVQVQVIVGAADDSGNRALSVYSRGDQSEDWLLNAEGMLGVEAASSGADLSVWPPEGAESVDISDGYAQLADRGYAYGPGFQGLVGVWRRDSELFAEVVAPSGVAVDKMGMHPVVLDAVLHALGLTAEQNPDSDETKLPFCWRGVSLHAGGAGRVRARLTMSGPDSISVEIADAAGLPVLTVGALVTRAMSAAQLRAAVAAAGGGAPDQGPLDVIWSPIPLSGSGTNGSAQPAVVSWADFCAGGDGGAAGDAGVVVWEPNPAGEDVVGSVYAATHAALEVLQSWFDGDRAGTLVVLTHGAVAMPGENVSDLAGAAVWGIVRSAQAENPGRIVLVDADAAVEAAELVAVGEPQLVVRSGAAHAARLAPAAPLLAVPADESAWRLAAGGGGTLEDLVIEPCPEVQAPLAAGQVRVAVRAVGVNFRDVVAALGMYPGEAPPLGAEGAGVVLEVGPQVSGVAVGDSVMGFLGGAGPLSVVDQQLITRMPQGWSFAQAAAVPVVFLTALFGLQDLAKIQPGESVLIHAGTGGVGMAAVQLARHWGVEIFVTASRGKWDTLRAMGFDDDHIGDSRTLDFEEKFLAVTDGRGVDVVLDSLAGDFVDASLRLLVRGGRFLEMGKTDIRDADKIAANYPGVWYRAFDLSEAGPVRMQEMLAEVRELFDTAVLHRLPVTTWDVRCAPAAFRFMSQARHIGKVVLTMPSALADGLADATVLITGATGAVGAVLARHMLDAYGVRHLVLASRRGDRAEGAAELAAELSEAGANVQVVACDVADRDAVEAMLARLSGEYPPVRGVIHAAGVLDDAVISSLTPERIDTVLRAKVDAAWNLHEATLDLDLSMFVLCSSIAATVGSPGQGNYSAANSFLDGLAAHRQAAGLAGISVAWGLWEQSGGMAAHLSSRDLARMSRSGLAPMNPEQAVGLLDAVLAINHPLMVATLLDRPALEARAQAGGLPPLFAGVVRRPRRRQIEDTGDAAQSKSALAERLNGLSAGERQDALVGLVCLQAAAVLGRPSPEDIDPEAGFQDLGFDSLTAVELRNRLKSATGLTLPPTVIFDHPTPTAIAEYVGRQIPDSQATQAEEEKLPESDGEMVSVTA</sequence>
<keyword id="KW-0012">Acyltransferase</keyword>
<keyword id="KW-0276">Fatty acid metabolism</keyword>
<keyword id="KW-0443">Lipid metabolism</keyword>
<keyword id="KW-0511">Multifunctional enzyme</keyword>
<keyword id="KW-0596">Phosphopantetheine</keyword>
<keyword id="KW-0597">Phosphoprotein</keyword>
<keyword id="KW-1185">Reference proteome</keyword>
<keyword id="KW-0808">Transferase</keyword>
<protein>
    <recommendedName>
        <fullName>Phenolphthiocerol synthesis polyketide synthase type I Pks15/1</fullName>
    </recommendedName>
    <alternativeName>
        <fullName>Beta-ketoacyl-acyl-carrier-protein synthase I</fullName>
        <ecNumber>2.3.1.41</ecNumber>
    </alternativeName>
</protein>
<evidence type="ECO:0000250" key="1"/>
<evidence type="ECO:0000255" key="2">
    <source>
        <dbReference type="PROSITE-ProRule" id="PRU00258"/>
    </source>
</evidence>
<evidence type="ECO:0000255" key="3">
    <source>
        <dbReference type="PROSITE-ProRule" id="PRU01348"/>
    </source>
</evidence>
<evidence type="ECO:0000255" key="4">
    <source>
        <dbReference type="PROSITE-ProRule" id="PRU01363"/>
    </source>
</evidence>
<evidence type="ECO:0000255" key="5">
    <source>
        <dbReference type="PROSITE-ProRule" id="PRU10022"/>
    </source>
</evidence>
<evidence type="ECO:0000256" key="6">
    <source>
        <dbReference type="SAM" id="MobiDB-lite"/>
    </source>
</evidence>
<evidence type="ECO:0000269" key="7">
    <source>
    </source>
</evidence>
<evidence type="ECO:0000305" key="8"/>
<feature type="chain" id="PRO_0000406361" description="Phenolphthiocerol synthesis polyketide synthase type I Pks15/1">
    <location>
        <begin position="1"/>
        <end position="2104"/>
    </location>
</feature>
<feature type="domain" description="Ketosynthase family 3 (KS3)" evidence="3">
    <location>
        <begin position="41"/>
        <end position="464"/>
    </location>
</feature>
<feature type="domain" description="PKS/mFAS DH" evidence="4">
    <location>
        <begin position="935"/>
        <end position="1207"/>
    </location>
</feature>
<feature type="domain" description="Carrier" evidence="2">
    <location>
        <begin position="2004"/>
        <end position="2079"/>
    </location>
</feature>
<feature type="region of interest" description="Acyltransferase" evidence="1">
    <location>
        <begin position="571"/>
        <end position="887"/>
    </location>
</feature>
<feature type="region of interest" description="Dehydratase" evidence="1">
    <location>
        <begin position="935"/>
        <end position="1095"/>
    </location>
</feature>
<feature type="region of interest" description="N-terminal hotdog fold" evidence="4">
    <location>
        <begin position="935"/>
        <end position="1057"/>
    </location>
</feature>
<feature type="region of interest" description="C-terminal hotdog fold" evidence="4">
    <location>
        <begin position="1069"/>
        <end position="1207"/>
    </location>
</feature>
<feature type="region of interest" description="Enoylreductase" evidence="1">
    <location>
        <begin position="1400"/>
        <end position="1705"/>
    </location>
</feature>
<feature type="region of interest" description="Beta-ketoacyl reductase (KR)">
    <location>
        <begin position="1718"/>
        <end position="1899"/>
    </location>
</feature>
<feature type="region of interest" description="Disordered" evidence="6">
    <location>
        <begin position="2081"/>
        <end position="2104"/>
    </location>
</feature>
<feature type="active site" description="For beta-ketoacyl synthase activity" evidence="3">
    <location>
        <position position="211"/>
    </location>
</feature>
<feature type="active site" description="For beta-ketoacyl synthase activity" evidence="3">
    <location>
        <position position="346"/>
    </location>
</feature>
<feature type="active site" description="For beta-ketoacyl synthase activity" evidence="3">
    <location>
        <position position="386"/>
    </location>
</feature>
<feature type="active site" description="For acyltransferase activity" evidence="5">
    <location>
        <position position="662"/>
    </location>
</feature>
<feature type="active site" description="Proton acceptor; for dehydratase activity" evidence="4">
    <location>
        <position position="967"/>
    </location>
</feature>
<feature type="active site" description="Proton donor; for dehydratase activity" evidence="4">
    <location>
        <position position="1128"/>
    </location>
</feature>
<feature type="binding site" evidence="1">
    <location>
        <begin position="1530"/>
        <end position="1547"/>
    </location>
    <ligand>
        <name>NADP(+)</name>
        <dbReference type="ChEBI" id="CHEBI:58349"/>
    </ligand>
</feature>
<feature type="binding site" evidence="1">
    <location>
        <begin position="1719"/>
        <end position="1734"/>
    </location>
    <ligand>
        <name>NADP(+)</name>
        <dbReference type="ChEBI" id="CHEBI:58349"/>
    </ligand>
</feature>
<feature type="modified residue" description="O-(pantetheine 4'-phosphoryl)serine" evidence="2">
    <location>
        <position position="2039"/>
    </location>
</feature>
<feature type="mutagenesis site" description="The pHBA starter unit is not loaded onto Pks15/1 and thus the pHPA intermediate is not produced." evidence="7">
    <original>C</original>
    <variation>A</variation>
    <location>
        <position position="211"/>
    </location>
</feature>
<feature type="mutagenesis site" description="The pHBA starter unit is loaded onto Pks15/1, but the pHPA intermediate is not produced." evidence="7">
    <original>S</original>
    <variation>A</variation>
    <location>
        <position position="2039"/>
    </location>
</feature>
<organism>
    <name type="scientific">Mycobacterium marinum (strain ATCC BAA-535 / M)</name>
    <dbReference type="NCBI Taxonomy" id="216594"/>
    <lineage>
        <taxon>Bacteria</taxon>
        <taxon>Bacillati</taxon>
        <taxon>Actinomycetota</taxon>
        <taxon>Actinomycetes</taxon>
        <taxon>Mycobacteriales</taxon>
        <taxon>Mycobacteriaceae</taxon>
        <taxon>Mycobacterium</taxon>
        <taxon>Mycobacterium ulcerans group</taxon>
    </lineage>
</organism>
<gene>
    <name type="primary">pks15/1</name>
    <name type="synonym">msl7</name>
    <name type="ordered locus">MMAR_1762</name>
</gene>